<keyword id="KW-0066">ATP synthesis</keyword>
<keyword id="KW-0997">Cell inner membrane</keyword>
<keyword id="KW-1003">Cell membrane</keyword>
<keyword id="KW-0138">CF(0)</keyword>
<keyword id="KW-0375">Hydrogen ion transport</keyword>
<keyword id="KW-0406">Ion transport</keyword>
<keyword id="KW-0446">Lipid-binding</keyword>
<keyword id="KW-0472">Membrane</keyword>
<keyword id="KW-1185">Reference proteome</keyword>
<keyword id="KW-0812">Transmembrane</keyword>
<keyword id="KW-1133">Transmembrane helix</keyword>
<keyword id="KW-0813">Transport</keyword>
<name>ATPL_NITOC</name>
<sequence length="94" mass="9843">MDPELLVSIYASTAVSVGIILAAAGLGSALGWGLICSKYLEGIARQPEMRPQLMGQMLFTGGLMEAFPMIVLGMSMWFIFANPFTGAALAAIGS</sequence>
<gene>
    <name evidence="1" type="primary">atpE</name>
    <name type="ordered locus">Noc_3079</name>
</gene>
<accession>Q3J6M6</accession>
<organism>
    <name type="scientific">Nitrosococcus oceani (strain ATCC 19707 / BCRC 17464 / JCM 30415 / NCIMB 11848 / C-107)</name>
    <dbReference type="NCBI Taxonomy" id="323261"/>
    <lineage>
        <taxon>Bacteria</taxon>
        <taxon>Pseudomonadati</taxon>
        <taxon>Pseudomonadota</taxon>
        <taxon>Gammaproteobacteria</taxon>
        <taxon>Chromatiales</taxon>
        <taxon>Chromatiaceae</taxon>
        <taxon>Nitrosococcus</taxon>
    </lineage>
</organism>
<comment type="function">
    <text evidence="1">F(1)F(0) ATP synthase produces ATP from ADP in the presence of a proton or sodium gradient. F-type ATPases consist of two structural domains, F(1) containing the extramembraneous catalytic core and F(0) containing the membrane proton channel, linked together by a central stalk and a peripheral stalk. During catalysis, ATP synthesis in the catalytic domain of F(1) is coupled via a rotary mechanism of the central stalk subunits to proton translocation.</text>
</comment>
<comment type="function">
    <text evidence="1">Key component of the F(0) channel; it plays a direct role in translocation across the membrane. A homomeric c-ring of between 10-14 subunits forms the central stalk rotor element with the F(1) delta and epsilon subunits.</text>
</comment>
<comment type="subunit">
    <text evidence="1">F-type ATPases have 2 components, F(1) - the catalytic core - and F(0) - the membrane proton channel. F(1) has five subunits: alpha(3), beta(3), gamma(1), delta(1), epsilon(1). F(0) has three main subunits: a(1), b(2) and c(10-14). The alpha and beta chains form an alternating ring which encloses part of the gamma chain. F(1) is attached to F(0) by a central stalk formed by the gamma and epsilon chains, while a peripheral stalk is formed by the delta and b chains.</text>
</comment>
<comment type="subcellular location">
    <subcellularLocation>
        <location evidence="1">Cell inner membrane</location>
        <topology evidence="1">Multi-pass membrane protein</topology>
    </subcellularLocation>
</comment>
<comment type="similarity">
    <text evidence="1">Belongs to the ATPase C chain family.</text>
</comment>
<evidence type="ECO:0000255" key="1">
    <source>
        <dbReference type="HAMAP-Rule" id="MF_01396"/>
    </source>
</evidence>
<reference key="1">
    <citation type="journal article" date="2006" name="Appl. Environ. Microbiol.">
        <title>Complete genome sequence of the marine, chemolithoautotrophic, ammonia-oxidizing bacterium Nitrosococcus oceani ATCC 19707.</title>
        <authorList>
            <person name="Klotz M.G."/>
            <person name="Arp D.J."/>
            <person name="Chain P.S.G."/>
            <person name="El-Sheikh A.F."/>
            <person name="Hauser L.J."/>
            <person name="Hommes N.G."/>
            <person name="Larimer F.W."/>
            <person name="Malfatti S.A."/>
            <person name="Norton J.M."/>
            <person name="Poret-Peterson A.T."/>
            <person name="Vergez L.M."/>
            <person name="Ward B.B."/>
        </authorList>
    </citation>
    <scope>NUCLEOTIDE SEQUENCE [LARGE SCALE GENOMIC DNA]</scope>
    <source>
        <strain>ATCC 19707 / BCRC 17464 / JCM 30415 / NCIMB 11848 / C-107</strain>
    </source>
</reference>
<protein>
    <recommendedName>
        <fullName evidence="1">ATP synthase subunit c</fullName>
    </recommendedName>
    <alternativeName>
        <fullName evidence="1">ATP synthase F(0) sector subunit c</fullName>
    </alternativeName>
    <alternativeName>
        <fullName evidence="1">F-type ATPase subunit c</fullName>
        <shortName evidence="1">F-ATPase subunit c</shortName>
    </alternativeName>
    <alternativeName>
        <fullName evidence="1">Lipid-binding protein</fullName>
    </alternativeName>
</protein>
<feature type="chain" id="PRO_1000184424" description="ATP synthase subunit c">
    <location>
        <begin position="1"/>
        <end position="94"/>
    </location>
</feature>
<feature type="transmembrane region" description="Helical" evidence="1">
    <location>
        <begin position="15"/>
        <end position="35"/>
    </location>
</feature>
<feature type="transmembrane region" description="Helical" evidence="1">
    <location>
        <begin position="61"/>
        <end position="81"/>
    </location>
</feature>
<feature type="site" description="Reversibly protonated during proton transport" evidence="1">
    <location>
        <position position="65"/>
    </location>
</feature>
<proteinExistence type="inferred from homology"/>
<dbReference type="EMBL" id="CP000127">
    <property type="protein sequence ID" value="ABA59520.1"/>
    <property type="molecule type" value="Genomic_DNA"/>
</dbReference>
<dbReference type="RefSeq" id="WP_002813053.1">
    <property type="nucleotide sequence ID" value="NC_007484.1"/>
</dbReference>
<dbReference type="SMR" id="Q3J6M6"/>
<dbReference type="FunCoup" id="Q3J6M6">
    <property type="interactions" value="178"/>
</dbReference>
<dbReference type="STRING" id="323261.Noc_3079"/>
<dbReference type="KEGG" id="noc:Noc_3079"/>
<dbReference type="eggNOG" id="COG0636">
    <property type="taxonomic scope" value="Bacteria"/>
</dbReference>
<dbReference type="HOGENOM" id="CLU_148047_1_0_6"/>
<dbReference type="InParanoid" id="Q3J6M6"/>
<dbReference type="Proteomes" id="UP000006838">
    <property type="component" value="Chromosome"/>
</dbReference>
<dbReference type="GO" id="GO:0005886">
    <property type="term" value="C:plasma membrane"/>
    <property type="evidence" value="ECO:0007669"/>
    <property type="project" value="UniProtKB-SubCell"/>
</dbReference>
<dbReference type="GO" id="GO:0045259">
    <property type="term" value="C:proton-transporting ATP synthase complex"/>
    <property type="evidence" value="ECO:0007669"/>
    <property type="project" value="UniProtKB-KW"/>
</dbReference>
<dbReference type="GO" id="GO:0033177">
    <property type="term" value="C:proton-transporting two-sector ATPase complex, proton-transporting domain"/>
    <property type="evidence" value="ECO:0007669"/>
    <property type="project" value="InterPro"/>
</dbReference>
<dbReference type="GO" id="GO:0008289">
    <property type="term" value="F:lipid binding"/>
    <property type="evidence" value="ECO:0007669"/>
    <property type="project" value="UniProtKB-KW"/>
</dbReference>
<dbReference type="GO" id="GO:0046933">
    <property type="term" value="F:proton-transporting ATP synthase activity, rotational mechanism"/>
    <property type="evidence" value="ECO:0007669"/>
    <property type="project" value="UniProtKB-UniRule"/>
</dbReference>
<dbReference type="CDD" id="cd18185">
    <property type="entry name" value="ATP-synt_Fo_c_ATPE"/>
    <property type="match status" value="1"/>
</dbReference>
<dbReference type="FunFam" id="1.20.20.10:FF:000002">
    <property type="entry name" value="ATP synthase subunit c"/>
    <property type="match status" value="1"/>
</dbReference>
<dbReference type="Gene3D" id="1.20.20.10">
    <property type="entry name" value="F1F0 ATP synthase subunit C"/>
    <property type="match status" value="1"/>
</dbReference>
<dbReference type="HAMAP" id="MF_01396">
    <property type="entry name" value="ATP_synth_c_bact"/>
    <property type="match status" value="1"/>
</dbReference>
<dbReference type="InterPro" id="IPR005953">
    <property type="entry name" value="ATP_synth_csu_bac/chlpt"/>
</dbReference>
<dbReference type="InterPro" id="IPR000454">
    <property type="entry name" value="ATP_synth_F0_csu"/>
</dbReference>
<dbReference type="InterPro" id="IPR020537">
    <property type="entry name" value="ATP_synth_F0_csu_DDCD_BS"/>
</dbReference>
<dbReference type="InterPro" id="IPR038662">
    <property type="entry name" value="ATP_synth_F0_csu_sf"/>
</dbReference>
<dbReference type="InterPro" id="IPR002379">
    <property type="entry name" value="ATPase_proteolipid_c-like_dom"/>
</dbReference>
<dbReference type="InterPro" id="IPR035921">
    <property type="entry name" value="F/V-ATP_Csub_sf"/>
</dbReference>
<dbReference type="NCBIfam" id="TIGR01260">
    <property type="entry name" value="ATP_synt_c"/>
    <property type="match status" value="1"/>
</dbReference>
<dbReference type="NCBIfam" id="NF005363">
    <property type="entry name" value="PRK06876.1"/>
    <property type="match status" value="1"/>
</dbReference>
<dbReference type="Pfam" id="PF00137">
    <property type="entry name" value="ATP-synt_C"/>
    <property type="match status" value="1"/>
</dbReference>
<dbReference type="PRINTS" id="PR00124">
    <property type="entry name" value="ATPASEC"/>
</dbReference>
<dbReference type="SUPFAM" id="SSF81333">
    <property type="entry name" value="F1F0 ATP synthase subunit C"/>
    <property type="match status" value="1"/>
</dbReference>
<dbReference type="PROSITE" id="PS00605">
    <property type="entry name" value="ATPASE_C"/>
    <property type="match status" value="1"/>
</dbReference>